<feature type="chain" id="PRO_1000064246" description="Protein TsgA">
    <location>
        <begin position="1"/>
        <end position="393"/>
    </location>
</feature>
<feature type="transmembrane region" description="Helical" evidence="1">
    <location>
        <begin position="11"/>
        <end position="31"/>
    </location>
</feature>
<feature type="transmembrane region" description="Helical" evidence="1">
    <location>
        <begin position="51"/>
        <end position="71"/>
    </location>
</feature>
<feature type="transmembrane region" description="Helical" evidence="1">
    <location>
        <begin position="78"/>
        <end position="98"/>
    </location>
</feature>
<feature type="transmembrane region" description="Helical" evidence="1">
    <location>
        <begin position="101"/>
        <end position="121"/>
    </location>
</feature>
<feature type="transmembrane region" description="Helical" evidence="1">
    <location>
        <begin position="134"/>
        <end position="154"/>
    </location>
</feature>
<feature type="transmembrane region" description="Helical" evidence="1">
    <location>
        <begin position="162"/>
        <end position="182"/>
    </location>
</feature>
<feature type="transmembrane region" description="Helical" evidence="1">
    <location>
        <begin position="206"/>
        <end position="226"/>
    </location>
</feature>
<feature type="transmembrane region" description="Helical" evidence="1">
    <location>
        <begin position="245"/>
        <end position="265"/>
    </location>
</feature>
<feature type="transmembrane region" description="Helical" evidence="1">
    <location>
        <begin position="273"/>
        <end position="293"/>
    </location>
</feature>
<feature type="transmembrane region" description="Helical" evidence="1">
    <location>
        <begin position="297"/>
        <end position="317"/>
    </location>
</feature>
<feature type="transmembrane region" description="Helical" evidence="1">
    <location>
        <begin position="332"/>
        <end position="352"/>
    </location>
</feature>
<feature type="transmembrane region" description="Helical" evidence="1">
    <location>
        <begin position="361"/>
        <end position="381"/>
    </location>
</feature>
<sequence length="393" mass="43210">MTNSNRIKLTWISFLSYALTGALVIVTGMVMGNIADYFNLPVSSMSNTFTFLNAGILISIFLNAWLMEIVPLKTQLRFGFLLMVLAVAGLMFSHSLALFSTAMFILGVVSGITMSIGTFLITQMYEGRQRGSRLLFTDSFFSMAGMIFPMIAAFLLARSIEWYWVYACIGLVYVAIFILTFGCEFPALGKHAPKTDAPVEKEKWGIGVLFLSVAALCYILGQLGFISWVPEYAKGLGMSLNDAGTLVSNFWMSYMVGMWAFSFILRFFDLQRILTVLAGLAAILMYVFNTGTPAHMAWSILALGFFSSAIYTTIITLGSQQTKVPSPKLVNFVLTCGTIGTMLTFVVTGPIVEHSGPQAALLTANGLYAVVFVMCFLLGFVSRHRQHNTLTSH</sequence>
<dbReference type="EMBL" id="CP000802">
    <property type="protein sequence ID" value="ABV07775.1"/>
    <property type="molecule type" value="Genomic_DNA"/>
</dbReference>
<dbReference type="RefSeq" id="WP_000185258.1">
    <property type="nucleotide sequence ID" value="NC_009800.1"/>
</dbReference>
<dbReference type="SMR" id="A8A5H1"/>
<dbReference type="GeneID" id="93778633"/>
<dbReference type="KEGG" id="ecx:EcHS_A3560"/>
<dbReference type="HOGENOM" id="CLU_056916_0_0_6"/>
<dbReference type="GO" id="GO:0005886">
    <property type="term" value="C:plasma membrane"/>
    <property type="evidence" value="ECO:0007669"/>
    <property type="project" value="UniProtKB-SubCell"/>
</dbReference>
<dbReference type="GO" id="GO:0022857">
    <property type="term" value="F:transmembrane transporter activity"/>
    <property type="evidence" value="ECO:0007669"/>
    <property type="project" value="InterPro"/>
</dbReference>
<dbReference type="CDD" id="cd17333">
    <property type="entry name" value="MFS_FucP_MFSD4_like"/>
    <property type="match status" value="1"/>
</dbReference>
<dbReference type="FunFam" id="1.20.1250.20:FF:000032">
    <property type="entry name" value="Protein TsgA"/>
    <property type="match status" value="1"/>
</dbReference>
<dbReference type="FunFam" id="1.20.1250.20:FF:000052">
    <property type="entry name" value="Protein TsgA"/>
    <property type="match status" value="1"/>
</dbReference>
<dbReference type="Gene3D" id="1.20.1250.20">
    <property type="entry name" value="MFS general substrate transporter like domains"/>
    <property type="match status" value="2"/>
</dbReference>
<dbReference type="HAMAP" id="MF_01044">
    <property type="entry name" value="MFS_TsgA"/>
    <property type="match status" value="1"/>
</dbReference>
<dbReference type="InterPro" id="IPR011701">
    <property type="entry name" value="MFS"/>
</dbReference>
<dbReference type="InterPro" id="IPR020846">
    <property type="entry name" value="MFS_dom"/>
</dbReference>
<dbReference type="InterPro" id="IPR036259">
    <property type="entry name" value="MFS_trans_sf"/>
</dbReference>
<dbReference type="InterPro" id="IPR023528">
    <property type="entry name" value="MFS_TsgA"/>
</dbReference>
<dbReference type="InterPro" id="IPR050375">
    <property type="entry name" value="MFS_TsgA-like"/>
</dbReference>
<dbReference type="NCBIfam" id="NF002982">
    <property type="entry name" value="PRK03699.1"/>
    <property type="match status" value="1"/>
</dbReference>
<dbReference type="PANTHER" id="PTHR43702">
    <property type="entry name" value="L-FUCOSE-PROTON SYMPORTER"/>
    <property type="match status" value="1"/>
</dbReference>
<dbReference type="PANTHER" id="PTHR43702:SF3">
    <property type="entry name" value="PROTEIN TSGA"/>
    <property type="match status" value="1"/>
</dbReference>
<dbReference type="Pfam" id="PF07690">
    <property type="entry name" value="MFS_1"/>
    <property type="match status" value="1"/>
</dbReference>
<dbReference type="SUPFAM" id="SSF103473">
    <property type="entry name" value="MFS general substrate transporter"/>
    <property type="match status" value="1"/>
</dbReference>
<dbReference type="PROSITE" id="PS50850">
    <property type="entry name" value="MFS"/>
    <property type="match status" value="1"/>
</dbReference>
<gene>
    <name evidence="1" type="primary">tsgA</name>
    <name type="ordered locus">EcHS_A3560</name>
</gene>
<proteinExistence type="inferred from homology"/>
<protein>
    <recommendedName>
        <fullName evidence="1">Protein TsgA</fullName>
    </recommendedName>
</protein>
<evidence type="ECO:0000255" key="1">
    <source>
        <dbReference type="HAMAP-Rule" id="MF_01044"/>
    </source>
</evidence>
<organism>
    <name type="scientific">Escherichia coli O9:H4 (strain HS)</name>
    <dbReference type="NCBI Taxonomy" id="331112"/>
    <lineage>
        <taxon>Bacteria</taxon>
        <taxon>Pseudomonadati</taxon>
        <taxon>Pseudomonadota</taxon>
        <taxon>Gammaproteobacteria</taxon>
        <taxon>Enterobacterales</taxon>
        <taxon>Enterobacteriaceae</taxon>
        <taxon>Escherichia</taxon>
    </lineage>
</organism>
<name>TSGA_ECOHS</name>
<reference key="1">
    <citation type="journal article" date="2008" name="J. Bacteriol.">
        <title>The pangenome structure of Escherichia coli: comparative genomic analysis of E. coli commensal and pathogenic isolates.</title>
        <authorList>
            <person name="Rasko D.A."/>
            <person name="Rosovitz M.J."/>
            <person name="Myers G.S.A."/>
            <person name="Mongodin E.F."/>
            <person name="Fricke W.F."/>
            <person name="Gajer P."/>
            <person name="Crabtree J."/>
            <person name="Sebaihia M."/>
            <person name="Thomson N.R."/>
            <person name="Chaudhuri R."/>
            <person name="Henderson I.R."/>
            <person name="Sperandio V."/>
            <person name="Ravel J."/>
        </authorList>
    </citation>
    <scope>NUCLEOTIDE SEQUENCE [LARGE SCALE GENOMIC DNA]</scope>
    <source>
        <strain>HS</strain>
    </source>
</reference>
<keyword id="KW-0997">Cell inner membrane</keyword>
<keyword id="KW-1003">Cell membrane</keyword>
<keyword id="KW-0472">Membrane</keyword>
<keyword id="KW-0812">Transmembrane</keyword>
<keyword id="KW-1133">Transmembrane helix</keyword>
<comment type="subcellular location">
    <subcellularLocation>
        <location evidence="1">Cell inner membrane</location>
        <topology evidence="1">Multi-pass membrane protein</topology>
    </subcellularLocation>
</comment>
<comment type="similarity">
    <text evidence="1">Belongs to the major facilitator superfamily. TsgA family.</text>
</comment>
<accession>A8A5H1</accession>